<proteinExistence type="inferred from homology"/>
<name>HLDE_YERPP</name>
<protein>
    <recommendedName>
        <fullName evidence="1">Bifunctional protein HldE</fullName>
    </recommendedName>
    <domain>
        <recommendedName>
            <fullName evidence="1">D-beta-D-heptose 7-phosphate kinase</fullName>
            <ecNumber evidence="1">2.7.1.167</ecNumber>
        </recommendedName>
        <alternativeName>
            <fullName evidence="1">D-beta-D-heptose 7-phosphotransferase</fullName>
        </alternativeName>
        <alternativeName>
            <fullName evidence="1">D-glycero-beta-D-manno-heptose-7-phosphate kinase</fullName>
        </alternativeName>
    </domain>
    <domain>
        <recommendedName>
            <fullName evidence="1">D-beta-D-heptose 1-phosphate adenylyltransferase</fullName>
            <ecNumber evidence="1">2.7.7.70</ecNumber>
        </recommendedName>
        <alternativeName>
            <fullName evidence="1">D-glycero-beta-D-manno-heptose 1-phosphate adenylyltransferase</fullName>
        </alternativeName>
    </domain>
</protein>
<dbReference type="EC" id="2.7.1.167" evidence="1"/>
<dbReference type="EC" id="2.7.7.70" evidence="1"/>
<dbReference type="EMBL" id="CP000668">
    <property type="protein sequence ID" value="ABP38851.1"/>
    <property type="molecule type" value="Genomic_DNA"/>
</dbReference>
<dbReference type="RefSeq" id="WP_002212193.1">
    <property type="nucleotide sequence ID" value="NZ_CP009715.1"/>
</dbReference>
<dbReference type="SMR" id="A4THT9"/>
<dbReference type="GeneID" id="57973970"/>
<dbReference type="KEGG" id="ypp:YPDSF_0438"/>
<dbReference type="PATRIC" id="fig|386656.14.peg.1745"/>
<dbReference type="UniPathway" id="UPA00356">
    <property type="reaction ID" value="UER00437"/>
</dbReference>
<dbReference type="UniPathway" id="UPA00356">
    <property type="reaction ID" value="UER00439"/>
</dbReference>
<dbReference type="GO" id="GO:0005829">
    <property type="term" value="C:cytosol"/>
    <property type="evidence" value="ECO:0007669"/>
    <property type="project" value="TreeGrafter"/>
</dbReference>
<dbReference type="GO" id="GO:0005524">
    <property type="term" value="F:ATP binding"/>
    <property type="evidence" value="ECO:0007669"/>
    <property type="project" value="UniProtKB-UniRule"/>
</dbReference>
<dbReference type="GO" id="GO:0033785">
    <property type="term" value="F:heptose 7-phosphate kinase activity"/>
    <property type="evidence" value="ECO:0007669"/>
    <property type="project" value="UniProtKB-UniRule"/>
</dbReference>
<dbReference type="GO" id="GO:0033786">
    <property type="term" value="F:heptose-1-phosphate adenylyltransferase activity"/>
    <property type="evidence" value="ECO:0007669"/>
    <property type="project" value="UniProtKB-UniRule"/>
</dbReference>
<dbReference type="GO" id="GO:0016773">
    <property type="term" value="F:phosphotransferase activity, alcohol group as acceptor"/>
    <property type="evidence" value="ECO:0007669"/>
    <property type="project" value="InterPro"/>
</dbReference>
<dbReference type="GO" id="GO:0097171">
    <property type="term" value="P:ADP-L-glycero-beta-D-manno-heptose biosynthetic process"/>
    <property type="evidence" value="ECO:0007669"/>
    <property type="project" value="UniProtKB-UniPathway"/>
</dbReference>
<dbReference type="CDD" id="cd01172">
    <property type="entry name" value="RfaE_like"/>
    <property type="match status" value="1"/>
</dbReference>
<dbReference type="FunFam" id="3.40.1190.20:FF:000002">
    <property type="entry name" value="Bifunctional protein HldE"/>
    <property type="match status" value="1"/>
</dbReference>
<dbReference type="FunFam" id="3.40.50.620:FF:000028">
    <property type="entry name" value="Bifunctional protein HldE"/>
    <property type="match status" value="1"/>
</dbReference>
<dbReference type="Gene3D" id="3.40.1190.20">
    <property type="match status" value="1"/>
</dbReference>
<dbReference type="Gene3D" id="3.40.50.620">
    <property type="entry name" value="HUPs"/>
    <property type="match status" value="1"/>
</dbReference>
<dbReference type="HAMAP" id="MF_01603">
    <property type="entry name" value="HldE"/>
    <property type="match status" value="1"/>
</dbReference>
<dbReference type="InterPro" id="IPR023030">
    <property type="entry name" value="Bifunc_HldE"/>
</dbReference>
<dbReference type="InterPro" id="IPR002173">
    <property type="entry name" value="Carboh/pur_kinase_PfkB_CS"/>
</dbReference>
<dbReference type="InterPro" id="IPR004821">
    <property type="entry name" value="Cyt_trans-like"/>
</dbReference>
<dbReference type="InterPro" id="IPR011611">
    <property type="entry name" value="PfkB_dom"/>
</dbReference>
<dbReference type="InterPro" id="IPR011913">
    <property type="entry name" value="RfaE_dom_I"/>
</dbReference>
<dbReference type="InterPro" id="IPR011914">
    <property type="entry name" value="RfaE_dom_II"/>
</dbReference>
<dbReference type="InterPro" id="IPR029056">
    <property type="entry name" value="Ribokinase-like"/>
</dbReference>
<dbReference type="InterPro" id="IPR014729">
    <property type="entry name" value="Rossmann-like_a/b/a_fold"/>
</dbReference>
<dbReference type="NCBIfam" id="TIGR00125">
    <property type="entry name" value="cyt_tran_rel"/>
    <property type="match status" value="1"/>
</dbReference>
<dbReference type="NCBIfam" id="NF008454">
    <property type="entry name" value="PRK11316.1"/>
    <property type="match status" value="1"/>
</dbReference>
<dbReference type="NCBIfam" id="TIGR02198">
    <property type="entry name" value="rfaE_dom_I"/>
    <property type="match status" value="1"/>
</dbReference>
<dbReference type="NCBIfam" id="TIGR02199">
    <property type="entry name" value="rfaE_dom_II"/>
    <property type="match status" value="1"/>
</dbReference>
<dbReference type="PANTHER" id="PTHR46969">
    <property type="entry name" value="BIFUNCTIONAL PROTEIN HLDE"/>
    <property type="match status" value="1"/>
</dbReference>
<dbReference type="PANTHER" id="PTHR46969:SF1">
    <property type="entry name" value="BIFUNCTIONAL PROTEIN HLDE"/>
    <property type="match status" value="1"/>
</dbReference>
<dbReference type="Pfam" id="PF01467">
    <property type="entry name" value="CTP_transf_like"/>
    <property type="match status" value="1"/>
</dbReference>
<dbReference type="Pfam" id="PF00294">
    <property type="entry name" value="PfkB"/>
    <property type="match status" value="1"/>
</dbReference>
<dbReference type="SUPFAM" id="SSF52374">
    <property type="entry name" value="Nucleotidylyl transferase"/>
    <property type="match status" value="1"/>
</dbReference>
<dbReference type="SUPFAM" id="SSF53613">
    <property type="entry name" value="Ribokinase-like"/>
    <property type="match status" value="1"/>
</dbReference>
<dbReference type="PROSITE" id="PS00583">
    <property type="entry name" value="PFKB_KINASES_1"/>
    <property type="match status" value="1"/>
</dbReference>
<evidence type="ECO:0000255" key="1">
    <source>
        <dbReference type="HAMAP-Rule" id="MF_01603"/>
    </source>
</evidence>
<accession>A4THT9</accession>
<organism>
    <name type="scientific">Yersinia pestis (strain Pestoides F)</name>
    <dbReference type="NCBI Taxonomy" id="386656"/>
    <lineage>
        <taxon>Bacteria</taxon>
        <taxon>Pseudomonadati</taxon>
        <taxon>Pseudomonadota</taxon>
        <taxon>Gammaproteobacteria</taxon>
        <taxon>Enterobacterales</taxon>
        <taxon>Yersiniaceae</taxon>
        <taxon>Yersinia</taxon>
    </lineage>
</organism>
<keyword id="KW-0067">ATP-binding</keyword>
<keyword id="KW-0119">Carbohydrate metabolism</keyword>
<keyword id="KW-0418">Kinase</keyword>
<keyword id="KW-0511">Multifunctional enzyme</keyword>
<keyword id="KW-0547">Nucleotide-binding</keyword>
<keyword id="KW-0548">Nucleotidyltransferase</keyword>
<keyword id="KW-0808">Transferase</keyword>
<feature type="chain" id="PRO_0000323496" description="Bifunctional protein HldE">
    <location>
        <begin position="1"/>
        <end position="476"/>
    </location>
</feature>
<feature type="region of interest" description="Ribokinase">
    <location>
        <begin position="1"/>
        <end position="318"/>
    </location>
</feature>
<feature type="region of interest" description="Cytidylyltransferase">
    <location>
        <begin position="344"/>
        <end position="476"/>
    </location>
</feature>
<feature type="active site" evidence="1">
    <location>
        <position position="264"/>
    </location>
</feature>
<feature type="binding site" evidence="1">
    <location>
        <begin position="195"/>
        <end position="198"/>
    </location>
    <ligand>
        <name>ATP</name>
        <dbReference type="ChEBI" id="CHEBI:30616"/>
    </ligand>
</feature>
<comment type="function">
    <text evidence="1">Catalyzes the phosphorylation of D-glycero-D-manno-heptose 7-phosphate at the C-1 position to selectively form D-glycero-beta-D-manno-heptose-1,7-bisphosphate.</text>
</comment>
<comment type="function">
    <text evidence="1">Catalyzes the ADP transfer from ATP to D-glycero-beta-D-manno-heptose 1-phosphate, yielding ADP-D-glycero-beta-D-manno-heptose.</text>
</comment>
<comment type="catalytic activity">
    <reaction evidence="1">
        <text>D-glycero-beta-D-manno-heptose 7-phosphate + ATP = D-glycero-beta-D-manno-heptose 1,7-bisphosphate + ADP + H(+)</text>
        <dbReference type="Rhea" id="RHEA:27473"/>
        <dbReference type="ChEBI" id="CHEBI:15378"/>
        <dbReference type="ChEBI" id="CHEBI:30616"/>
        <dbReference type="ChEBI" id="CHEBI:60204"/>
        <dbReference type="ChEBI" id="CHEBI:60208"/>
        <dbReference type="ChEBI" id="CHEBI:456216"/>
        <dbReference type="EC" id="2.7.1.167"/>
    </reaction>
</comment>
<comment type="catalytic activity">
    <reaction evidence="1">
        <text>D-glycero-beta-D-manno-heptose 1-phosphate + ATP + H(+) = ADP-D-glycero-beta-D-manno-heptose + diphosphate</text>
        <dbReference type="Rhea" id="RHEA:27465"/>
        <dbReference type="ChEBI" id="CHEBI:15378"/>
        <dbReference type="ChEBI" id="CHEBI:30616"/>
        <dbReference type="ChEBI" id="CHEBI:33019"/>
        <dbReference type="ChEBI" id="CHEBI:59967"/>
        <dbReference type="ChEBI" id="CHEBI:61593"/>
        <dbReference type="EC" id="2.7.7.70"/>
    </reaction>
</comment>
<comment type="pathway">
    <text evidence="1">Nucleotide-sugar biosynthesis; ADP-L-glycero-beta-D-manno-heptose biosynthesis; ADP-L-glycero-beta-D-manno-heptose from D-glycero-beta-D-manno-heptose 7-phosphate: step 1/4.</text>
</comment>
<comment type="pathway">
    <text evidence="1">Nucleotide-sugar biosynthesis; ADP-L-glycero-beta-D-manno-heptose biosynthesis; ADP-L-glycero-beta-D-manno-heptose from D-glycero-beta-D-manno-heptose 7-phosphate: step 3/4.</text>
</comment>
<comment type="subunit">
    <text evidence="1">Homodimer.</text>
</comment>
<comment type="similarity">
    <text evidence="1">In the N-terminal section; belongs to the carbohydrate kinase PfkB family.</text>
</comment>
<comment type="similarity">
    <text evidence="1">In the C-terminal section; belongs to the cytidylyltransferase family.</text>
</comment>
<sequence length="476" mass="51218">MKVTLPDFRRAGVLVVGDVMLDRYWYGPTCRISPEAPVPVVKVDTIEERPGGAANVAMNIASLGAVARLVGLTGIDDAARALICKLSEVRVRCDFVSVPTHPTITKLRVLSRNQQLIRLDFEEGFDGVDPTPIFERIQLALPQIGALVLSDYAKGALNSVQPMIQLARKANVPVLIDPKGSDFERYRGATLLTPNLSEFEAVVGRCKNEEELVNRGMQLVADFELSALLVTRSEQGMTLLQLGKPPLHLPTQAKEVFDVTGAGDTVIGVLAAALAAGNSLEESCFLANAAAGVVVGKLGTSTVSPIELENAIRGRAETGFGVMDEQQLKIAVAQARQRGEKVVMTNGIFDILHAGHVSYLANARKLGDRLIVAVNSDASTKRLKGEKRPVNPLEQRMVVLGALEAVDWVVPFEEDTPQRLIADILPDLLVKGGDYKPHEIAGSEEVWAAGGEVKVLNFEDGVSTTNIIQSIKNGRG</sequence>
<reference key="1">
    <citation type="submission" date="2007-02" db="EMBL/GenBank/DDBJ databases">
        <title>Complete sequence of chromosome of Yersinia pestis Pestoides F.</title>
        <authorList>
            <consortium name="US DOE Joint Genome Institute"/>
            <person name="Copeland A."/>
            <person name="Lucas S."/>
            <person name="Lapidus A."/>
            <person name="Barry K."/>
            <person name="Detter J.C."/>
            <person name="Glavina del Rio T."/>
            <person name="Hammon N."/>
            <person name="Israni S."/>
            <person name="Dalin E."/>
            <person name="Tice H."/>
            <person name="Pitluck S."/>
            <person name="Di Bartolo G."/>
            <person name="Chain P."/>
            <person name="Malfatti S."/>
            <person name="Shin M."/>
            <person name="Vergez L."/>
            <person name="Schmutz J."/>
            <person name="Larimer F."/>
            <person name="Land M."/>
            <person name="Hauser L."/>
            <person name="Worsham P."/>
            <person name="Chu M."/>
            <person name="Bearden S."/>
            <person name="Garcia E."/>
            <person name="Richardson P."/>
        </authorList>
    </citation>
    <scope>NUCLEOTIDE SEQUENCE [LARGE SCALE GENOMIC DNA]</scope>
    <source>
        <strain>Pestoides F</strain>
    </source>
</reference>
<gene>
    <name evidence="1" type="primary">hldE</name>
    <name type="ordered locus">YPDSF_0438</name>
</gene>